<proteinExistence type="inferred from homology"/>
<reference key="1">
    <citation type="journal article" date="2007" name="Nature">
        <title>Evolution of genes and genomes on the Drosophila phylogeny.</title>
        <authorList>
            <consortium name="Drosophila 12 genomes consortium"/>
        </authorList>
    </citation>
    <scope>NUCLEOTIDE SEQUENCE [LARGE SCALE GENOMIC DNA]</scope>
</reference>
<dbReference type="EMBL" id="CM000364">
    <property type="protein sequence ID" value="EDX12500.1"/>
    <property type="molecule type" value="Genomic_DNA"/>
</dbReference>
<dbReference type="SMR" id="B4QV17"/>
<dbReference type="STRING" id="7240.B4QV17"/>
<dbReference type="EnsemblMetazoa" id="FBtr0219114">
    <property type="protein sequence ID" value="FBpp0217606"/>
    <property type="gene ID" value="FBgn0190709"/>
</dbReference>
<dbReference type="EnsemblMetazoa" id="XM_002102961.4">
    <property type="protein sequence ID" value="XP_002102997.1"/>
    <property type="gene ID" value="LOC6727618"/>
</dbReference>
<dbReference type="GeneID" id="6727618"/>
<dbReference type="KEGG" id="dsi:Dsimw501_GD19204"/>
<dbReference type="CTD" id="42166"/>
<dbReference type="HOGENOM" id="CLU_070952_2_0_1"/>
<dbReference type="OMA" id="DIRRIIM"/>
<dbReference type="OrthoDB" id="201398at2759"/>
<dbReference type="PhylomeDB" id="B4QV17"/>
<dbReference type="Proteomes" id="UP000000304">
    <property type="component" value="Chromosome 3R"/>
</dbReference>
<dbReference type="Bgee" id="FBgn0190709">
    <property type="expression patterns" value="Expressed in embryo and 3 other cell types or tissues"/>
</dbReference>
<dbReference type="GO" id="GO:0005846">
    <property type="term" value="C:nuclear cap binding complex"/>
    <property type="evidence" value="ECO:0007669"/>
    <property type="project" value="InterPro"/>
</dbReference>
<dbReference type="GO" id="GO:0005634">
    <property type="term" value="C:nucleus"/>
    <property type="evidence" value="ECO:0007669"/>
    <property type="project" value="UniProtKB-SubCell"/>
</dbReference>
<dbReference type="GO" id="GO:0099523">
    <property type="term" value="C:presynaptic cytosol"/>
    <property type="evidence" value="ECO:0007669"/>
    <property type="project" value="EnsemblMetazoa"/>
</dbReference>
<dbReference type="GO" id="GO:0000339">
    <property type="term" value="F:RNA cap binding"/>
    <property type="evidence" value="ECO:0007669"/>
    <property type="project" value="InterPro"/>
</dbReference>
<dbReference type="GO" id="GO:0045292">
    <property type="term" value="P:mRNA cis splicing, via spliceosome"/>
    <property type="evidence" value="ECO:0007669"/>
    <property type="project" value="InterPro"/>
</dbReference>
<dbReference type="GO" id="GO:0045071">
    <property type="term" value="P:negative regulation of viral genome replication"/>
    <property type="evidence" value="ECO:0007669"/>
    <property type="project" value="EnsemblMetazoa"/>
</dbReference>
<dbReference type="GO" id="GO:0031053">
    <property type="term" value="P:primary miRNA processing"/>
    <property type="evidence" value="ECO:0007669"/>
    <property type="project" value="EnsemblMetazoa"/>
</dbReference>
<dbReference type="GO" id="GO:0035194">
    <property type="term" value="P:regulatory ncRNA-mediated post-transcriptional gene silencing"/>
    <property type="evidence" value="ECO:0007669"/>
    <property type="project" value="EnsemblMetazoa"/>
</dbReference>
<dbReference type="GO" id="GO:0030422">
    <property type="term" value="P:siRNA processing"/>
    <property type="evidence" value="ECO:0007669"/>
    <property type="project" value="EnsemblMetazoa"/>
</dbReference>
<dbReference type="CDD" id="cd12240">
    <property type="entry name" value="RRM_NCBP2"/>
    <property type="match status" value="1"/>
</dbReference>
<dbReference type="FunFam" id="3.30.70.330:FF:000128">
    <property type="entry name" value="Nuclear cap-binding protein subunit 2"/>
    <property type="match status" value="1"/>
</dbReference>
<dbReference type="Gene3D" id="3.30.70.330">
    <property type="match status" value="1"/>
</dbReference>
<dbReference type="InterPro" id="IPR027157">
    <property type="entry name" value="NCBP2"/>
</dbReference>
<dbReference type="InterPro" id="IPR034148">
    <property type="entry name" value="NCBP2_RRM"/>
</dbReference>
<dbReference type="InterPro" id="IPR012677">
    <property type="entry name" value="Nucleotide-bd_a/b_plait_sf"/>
</dbReference>
<dbReference type="InterPro" id="IPR035979">
    <property type="entry name" value="RBD_domain_sf"/>
</dbReference>
<dbReference type="InterPro" id="IPR000504">
    <property type="entry name" value="RRM_dom"/>
</dbReference>
<dbReference type="PANTHER" id="PTHR18847">
    <property type="entry name" value="20 KD NUCLEAR CAP BINDING PROTEIN"/>
    <property type="match status" value="1"/>
</dbReference>
<dbReference type="PANTHER" id="PTHR18847:SF0">
    <property type="entry name" value="NUCLEAR CAP-BINDING PROTEIN SUBUNIT 2"/>
    <property type="match status" value="1"/>
</dbReference>
<dbReference type="Pfam" id="PF00076">
    <property type="entry name" value="RRM_1"/>
    <property type="match status" value="1"/>
</dbReference>
<dbReference type="SMART" id="SM00360">
    <property type="entry name" value="RRM"/>
    <property type="match status" value="1"/>
</dbReference>
<dbReference type="SUPFAM" id="SSF54928">
    <property type="entry name" value="RNA-binding domain, RBD"/>
    <property type="match status" value="1"/>
</dbReference>
<dbReference type="PROSITE" id="PS50102">
    <property type="entry name" value="RRM"/>
    <property type="match status" value="1"/>
</dbReference>
<protein>
    <recommendedName>
        <fullName>Nuclear cap-binding protein subunit 2</fullName>
    </recommendedName>
    <alternativeName>
        <fullName>20 kDa nuclear cap-binding protein</fullName>
    </alternativeName>
    <alternativeName>
        <fullName>NCBP 20 kDa subunit</fullName>
        <shortName>CBP20</shortName>
    </alternativeName>
</protein>
<comment type="function">
    <text evidence="1">Component of the cap-binding complex (CBC), which binds co-transcriptionally to the 5' cap of pre-mRNAs and is involved in various processes such as pre-mRNA splicing and RNA-mediated gene silencing (RNAi). The CBC complex is involved in miRNA-mediated RNA interference via its interaction with Ars2 and is required for primary microRNAs (miRNAs) processing. Also involved in innate immunity via the short interfering RNAs (siRNAs) processing machinery by restricting the viral RNA production. In the CBC complex, Cbp20 recognizes and binds capped RNAs (m7GpppG-capped RNA) but requires Cbp80 to stabilize the movement of its N-terminal loop and lock the CBC into a high affinity cap-binding state with the cap structure (By similarity).</text>
</comment>
<comment type="subunit">
    <text evidence="1">Component of the nuclear cap-binding complex (CBC), a heterodimer composed of Cbp80 and Cbp20 that interacts with m7GpppG-capped RNA. Interacts with Ars2 (By similarity).</text>
</comment>
<comment type="subcellular location">
    <subcellularLocation>
        <location evidence="1">Nucleus</location>
    </subcellularLocation>
</comment>
<comment type="similarity">
    <text evidence="3">Belongs to the RRM NCBP2 family.</text>
</comment>
<name>NCBP2_DROSI</name>
<evidence type="ECO:0000250" key="1"/>
<evidence type="ECO:0000255" key="2">
    <source>
        <dbReference type="PROSITE-ProRule" id="PRU00176"/>
    </source>
</evidence>
<evidence type="ECO:0000305" key="3"/>
<keyword id="KW-0507">mRNA processing</keyword>
<keyword id="KW-0508">mRNA splicing</keyword>
<keyword id="KW-0539">Nucleus</keyword>
<keyword id="KW-1185">Reference proteome</keyword>
<keyword id="KW-0694">RNA-binding</keyword>
<keyword id="KW-0943">RNA-mediated gene silencing</keyword>
<sequence length="154" mass="17719">MFASVELSSYRDQHFKGSRSEQERSLRDSCTLYVGNLSFYTTEEQIHELFSRCGDVRVIVMGLDKYKKTPCGFCFVEYYVRSEAEAAMRFVNGTRLDDRLIRVDWDAGFVEGRQYGRGKTGGQVRDEYRTDYDAGRGGYGKLLSQKIAPNTDNR</sequence>
<organism>
    <name type="scientific">Drosophila simulans</name>
    <name type="common">Fruit fly</name>
    <dbReference type="NCBI Taxonomy" id="7240"/>
    <lineage>
        <taxon>Eukaryota</taxon>
        <taxon>Metazoa</taxon>
        <taxon>Ecdysozoa</taxon>
        <taxon>Arthropoda</taxon>
        <taxon>Hexapoda</taxon>
        <taxon>Insecta</taxon>
        <taxon>Pterygota</taxon>
        <taxon>Neoptera</taxon>
        <taxon>Endopterygota</taxon>
        <taxon>Diptera</taxon>
        <taxon>Brachycera</taxon>
        <taxon>Muscomorpha</taxon>
        <taxon>Ephydroidea</taxon>
        <taxon>Drosophilidae</taxon>
        <taxon>Drosophila</taxon>
        <taxon>Sophophora</taxon>
    </lineage>
</organism>
<gene>
    <name type="primary">Cbp20</name>
    <name type="ORF">GD19204</name>
</gene>
<feature type="chain" id="PRO_0000385271" description="Nuclear cap-binding protein subunit 2">
    <location>
        <begin position="1"/>
        <end position="154"/>
    </location>
</feature>
<feature type="domain" description="RRM" evidence="2">
    <location>
        <begin position="30"/>
        <end position="108"/>
    </location>
</feature>
<feature type="binding site" evidence="1">
    <location>
        <position position="10"/>
    </location>
    <ligand>
        <name>mRNA</name>
        <dbReference type="ChEBI" id="CHEBI:33699"/>
    </ligand>
    <ligandPart>
        <name>mRNA cap</name>
    </ligandPart>
</feature>
<feature type="binding site" evidence="1">
    <location>
        <position position="33"/>
    </location>
    <ligand>
        <name>mRNA</name>
        <dbReference type="ChEBI" id="CHEBI:33699"/>
    </ligand>
    <ligandPart>
        <name>mRNA cap</name>
    </ligandPart>
</feature>
<feature type="binding site" evidence="1">
    <location>
        <begin position="102"/>
        <end position="106"/>
    </location>
    <ligand>
        <name>mRNA</name>
        <dbReference type="ChEBI" id="CHEBI:33699"/>
    </ligand>
    <ligandPart>
        <name>mRNA cap</name>
    </ligandPart>
</feature>
<feature type="binding site" evidence="1">
    <location>
        <begin position="113"/>
        <end position="117"/>
    </location>
    <ligand>
        <name>mRNA</name>
        <dbReference type="ChEBI" id="CHEBI:33699"/>
    </ligand>
    <ligandPart>
        <name>mRNA cap</name>
    </ligandPart>
</feature>
<feature type="binding site" evidence="1">
    <location>
        <begin position="123"/>
        <end position="124"/>
    </location>
    <ligand>
        <name>mRNA</name>
        <dbReference type="ChEBI" id="CHEBI:33699"/>
    </ligand>
    <ligandPart>
        <name>mRNA cap</name>
    </ligandPart>
</feature>
<accession>B4QV17</accession>